<organism>
    <name type="scientific">Escherichia coli O139:H28 (strain E24377A / ETEC)</name>
    <dbReference type="NCBI Taxonomy" id="331111"/>
    <lineage>
        <taxon>Bacteria</taxon>
        <taxon>Pseudomonadati</taxon>
        <taxon>Pseudomonadota</taxon>
        <taxon>Gammaproteobacteria</taxon>
        <taxon>Enterobacterales</taxon>
        <taxon>Enterobacteriaceae</taxon>
        <taxon>Escherichia</taxon>
    </lineage>
</organism>
<evidence type="ECO:0000255" key="1">
    <source>
        <dbReference type="HAMAP-Rule" id="MF_00601"/>
    </source>
</evidence>
<name>EUTC_ECO24</name>
<feature type="chain" id="PRO_1000061262" description="Ethanolamine ammonia-lyase small subunit">
    <location>
        <begin position="1"/>
        <end position="295"/>
    </location>
</feature>
<feature type="binding site" evidence="1">
    <location>
        <position position="207"/>
    </location>
    <ligand>
        <name>adenosylcob(III)alamin</name>
        <dbReference type="ChEBI" id="CHEBI:18408"/>
    </ligand>
</feature>
<feature type="binding site" evidence="1">
    <location>
        <position position="228"/>
    </location>
    <ligand>
        <name>adenosylcob(III)alamin</name>
        <dbReference type="ChEBI" id="CHEBI:18408"/>
    </ligand>
</feature>
<feature type="binding site" evidence="1">
    <location>
        <position position="258"/>
    </location>
    <ligand>
        <name>adenosylcob(III)alamin</name>
        <dbReference type="ChEBI" id="CHEBI:18408"/>
    </ligand>
</feature>
<comment type="function">
    <text evidence="1">Catalyzes the deamination of various vicinal amino-alcohols to oxo compounds. Allows this organism to utilize ethanolamine as the sole source of nitrogen and carbon in the presence of external vitamin B12.</text>
</comment>
<comment type="catalytic activity">
    <reaction evidence="1">
        <text>ethanolamine = acetaldehyde + NH4(+)</text>
        <dbReference type="Rhea" id="RHEA:15313"/>
        <dbReference type="ChEBI" id="CHEBI:15343"/>
        <dbReference type="ChEBI" id="CHEBI:28938"/>
        <dbReference type="ChEBI" id="CHEBI:57603"/>
        <dbReference type="EC" id="4.3.1.7"/>
    </reaction>
</comment>
<comment type="cofactor">
    <cofactor evidence="1">
        <name>adenosylcob(III)alamin</name>
        <dbReference type="ChEBI" id="CHEBI:18408"/>
    </cofactor>
    <text evidence="1">Binds between the large and small subunits.</text>
</comment>
<comment type="pathway">
    <text evidence="1">Amine and polyamine degradation; ethanolamine degradation.</text>
</comment>
<comment type="subunit">
    <text evidence="1">The basic unit is a heterodimer which dimerizes to form tetramers. The heterotetramers trimerize; 6 large subunits form a core ring with 6 small subunits projecting outwards.</text>
</comment>
<comment type="subcellular location">
    <subcellularLocation>
        <location evidence="1">Bacterial microcompartment</location>
    </subcellularLocation>
</comment>
<comment type="similarity">
    <text evidence="1">Belongs to the EutC family.</text>
</comment>
<reference key="1">
    <citation type="journal article" date="2008" name="J. Bacteriol.">
        <title>The pangenome structure of Escherichia coli: comparative genomic analysis of E. coli commensal and pathogenic isolates.</title>
        <authorList>
            <person name="Rasko D.A."/>
            <person name="Rosovitz M.J."/>
            <person name="Myers G.S.A."/>
            <person name="Mongodin E.F."/>
            <person name="Fricke W.F."/>
            <person name="Gajer P."/>
            <person name="Crabtree J."/>
            <person name="Sebaihia M."/>
            <person name="Thomson N.R."/>
            <person name="Chaudhuri R."/>
            <person name="Henderson I.R."/>
            <person name="Sperandio V."/>
            <person name="Ravel J."/>
        </authorList>
    </citation>
    <scope>NUCLEOTIDE SEQUENCE [LARGE SCALE GENOMIC DNA]</scope>
    <source>
        <strain>E24377A / ETEC</strain>
    </source>
</reference>
<proteinExistence type="inferred from homology"/>
<keyword id="KW-1283">Bacterial microcompartment</keyword>
<keyword id="KW-0846">Cobalamin</keyword>
<keyword id="KW-0170">Cobalt</keyword>
<keyword id="KW-0456">Lyase</keyword>
<keyword id="KW-1185">Reference proteome</keyword>
<sequence length="295" mass="31829">MDQKQIEEIVRSVMASMGQTAPAPSEAKCTTTTCAAPVTSESCALDLGSAEAKAWIGVENPHRADVLTELRRSTVARVCTGRAGPRPRTQALLRFLADHSRSKDTVLKEVPEEWVKAQGLLEVRSEISDKNLYLTRPDMGRRLCAEAVEALKAQCVANPDVQVVISDGLSTDAITVNYEEILPPLMAGLKQAGLKVGTPFFVRYGRVKIEDQIGEILGAKVVILLVGERPGLGQSESLSCYAVYSPRMATTVEADRTCISNIHQGGTPPVEAAAVIVDLAKRMLEQKASGINMTR</sequence>
<accession>A7ZPP0</accession>
<protein>
    <recommendedName>
        <fullName evidence="1">Ethanolamine ammonia-lyase small subunit</fullName>
        <shortName evidence="1">EAL small subunit</shortName>
        <ecNumber evidence="1">4.3.1.7</ecNumber>
    </recommendedName>
</protein>
<gene>
    <name evidence="1" type="primary">eutC</name>
    <name type="ordered locus">EcE24377A_2726</name>
</gene>
<dbReference type="EC" id="4.3.1.7" evidence="1"/>
<dbReference type="EMBL" id="CP000800">
    <property type="protein sequence ID" value="ABV19975.1"/>
    <property type="molecule type" value="Genomic_DNA"/>
</dbReference>
<dbReference type="RefSeq" id="WP_000372374.1">
    <property type="nucleotide sequence ID" value="NC_009801.1"/>
</dbReference>
<dbReference type="SMR" id="A7ZPP0"/>
<dbReference type="KEGG" id="ecw:EcE24377A_2726"/>
<dbReference type="HOGENOM" id="CLU_068224_0_0_6"/>
<dbReference type="UniPathway" id="UPA00560"/>
<dbReference type="Proteomes" id="UP000001122">
    <property type="component" value="Chromosome"/>
</dbReference>
<dbReference type="GO" id="GO:0009350">
    <property type="term" value="C:ethanolamine ammonia-lyase complex"/>
    <property type="evidence" value="ECO:0007669"/>
    <property type="project" value="UniProtKB-UniRule"/>
</dbReference>
<dbReference type="GO" id="GO:0031471">
    <property type="term" value="C:ethanolamine degradation polyhedral organelle"/>
    <property type="evidence" value="ECO:0007669"/>
    <property type="project" value="UniProtKB-UniRule"/>
</dbReference>
<dbReference type="GO" id="GO:0031419">
    <property type="term" value="F:cobalamin binding"/>
    <property type="evidence" value="ECO:0007669"/>
    <property type="project" value="UniProtKB-UniRule"/>
</dbReference>
<dbReference type="GO" id="GO:0008851">
    <property type="term" value="F:ethanolamine ammonia-lyase activity"/>
    <property type="evidence" value="ECO:0007669"/>
    <property type="project" value="UniProtKB-UniRule"/>
</dbReference>
<dbReference type="GO" id="GO:0006520">
    <property type="term" value="P:amino acid metabolic process"/>
    <property type="evidence" value="ECO:0007669"/>
    <property type="project" value="InterPro"/>
</dbReference>
<dbReference type="GO" id="GO:0046336">
    <property type="term" value="P:ethanolamine catabolic process"/>
    <property type="evidence" value="ECO:0007669"/>
    <property type="project" value="UniProtKB-UniRule"/>
</dbReference>
<dbReference type="FunFam" id="3.40.50.11240:FF:000001">
    <property type="entry name" value="Ethanolamine ammonia-lyase light chain"/>
    <property type="match status" value="1"/>
</dbReference>
<dbReference type="Gene3D" id="6.10.140.690">
    <property type="match status" value="1"/>
</dbReference>
<dbReference type="Gene3D" id="6.10.250.2060">
    <property type="match status" value="1"/>
</dbReference>
<dbReference type="Gene3D" id="3.40.50.11240">
    <property type="entry name" value="Ethanolamine ammonia-lyase light chain (EutC)"/>
    <property type="match status" value="1"/>
</dbReference>
<dbReference type="HAMAP" id="MF_00601">
    <property type="entry name" value="EutC"/>
    <property type="match status" value="1"/>
</dbReference>
<dbReference type="InterPro" id="IPR009246">
    <property type="entry name" value="EutC"/>
</dbReference>
<dbReference type="InterPro" id="IPR042251">
    <property type="entry name" value="EutC_C"/>
</dbReference>
<dbReference type="NCBIfam" id="NF003971">
    <property type="entry name" value="PRK05465.1"/>
    <property type="match status" value="1"/>
</dbReference>
<dbReference type="PANTHER" id="PTHR39330">
    <property type="entry name" value="ETHANOLAMINE AMMONIA-LYASE LIGHT CHAIN"/>
    <property type="match status" value="1"/>
</dbReference>
<dbReference type="PANTHER" id="PTHR39330:SF1">
    <property type="entry name" value="ETHANOLAMINE AMMONIA-LYASE SMALL SUBUNIT"/>
    <property type="match status" value="1"/>
</dbReference>
<dbReference type="Pfam" id="PF05985">
    <property type="entry name" value="EutC"/>
    <property type="match status" value="1"/>
</dbReference>
<dbReference type="PIRSF" id="PIRSF018982">
    <property type="entry name" value="EutC"/>
    <property type="match status" value="1"/>
</dbReference>